<evidence type="ECO:0000250" key="1"/>
<evidence type="ECO:0000255" key="2">
    <source>
        <dbReference type="PROSITE-ProRule" id="PRU10123"/>
    </source>
</evidence>
<evidence type="ECO:0000255" key="3">
    <source>
        <dbReference type="PROSITE-ProRule" id="PRU10124"/>
    </source>
</evidence>
<evidence type="ECO:0000269" key="4">
    <source>
    </source>
</evidence>
<evidence type="ECO:0000305" key="5"/>
<accession>P80081</accession>
<reference key="1">
    <citation type="journal article" date="1992" name="Biochem. Biophys. Res. Commun.">
        <title>6-pyruvoyl tetrahydropterin synthase from salmon liver: amino acid sequence analysis by tandem mass spectrometry.</title>
        <authorList>
            <person name="Hauer C.R."/>
            <person name="Leimbacher W."/>
            <person name="Hunziker P."/>
            <person name="Neuheiser F."/>
            <person name="Blau N."/>
            <person name="Heizmann C.W."/>
        </authorList>
    </citation>
    <scope>PROTEIN SEQUENCE</scope>
    <scope>ACETYLATION AT ALA-1</scope>
    <source>
        <tissue>Liver</tissue>
    </source>
</reference>
<keyword id="KW-0007">Acetylation</keyword>
<keyword id="KW-0903">Direct protein sequencing</keyword>
<keyword id="KW-0456">Lyase</keyword>
<keyword id="KW-0479">Metal-binding</keyword>
<keyword id="KW-1185">Reference proteome</keyword>
<keyword id="KW-0783">Tetrahydrobiopterin biosynthesis</keyword>
<keyword id="KW-0862">Zinc</keyword>
<feature type="chain" id="PRO_0000057917" description="6-pyruvoyl tetrahydrobiopterin synthase">
    <location>
        <begin position="1"/>
        <end position="103"/>
    </location>
</feature>
<feature type="active site" description="Charge relay system" evidence="3">
    <location>
        <position position="53"/>
    </location>
</feature>
<feature type="active site" description="Charge relay system" evidence="3">
    <location>
        <position position="92"/>
    </location>
</feature>
<feature type="binding site" evidence="2">
    <location>
        <position position="27"/>
    </location>
    <ligand>
        <name>Zn(2+)</name>
        <dbReference type="ChEBI" id="CHEBI:29105"/>
    </ligand>
</feature>
<feature type="modified residue" description="N-acetylalanine" evidence="4">
    <location>
        <position position="1"/>
    </location>
</feature>
<feature type="sequence variant">
    <original>AT</original>
    <variation>DV</variation>
    <location>
        <begin position="5"/>
        <end position="6"/>
    </location>
</feature>
<feature type="unsure residue" description="I or V">
    <location>
        <position position="38"/>
    </location>
</feature>
<feature type="unsure residue" description="I or V">
    <location>
        <position position="41"/>
    </location>
</feature>
<feature type="unsure residue" description="I or V">
    <location>
        <position position="45"/>
    </location>
</feature>
<feature type="non-consecutive residues" evidence="5">
    <location>
        <begin position="34"/>
        <end position="35"/>
    </location>
</feature>
<feature type="non-consecutive residues" evidence="5">
    <location>
        <begin position="49"/>
        <end position="50"/>
    </location>
</feature>
<feature type="non-consecutive residues" evidence="5">
    <location>
        <begin position="66"/>
        <end position="67"/>
    </location>
</feature>
<protein>
    <recommendedName>
        <fullName>6-pyruvoyl tetrahydrobiopterin synthase</fullName>
        <shortName>PTP synthase</shortName>
        <shortName>PTPS</shortName>
        <ecNumber>4.2.3.12</ecNumber>
    </recommendedName>
</protein>
<sequence>AQADATANEVAERIGYITRVQSFCASHRLHSPTLVMNITNIKEHIEEVIPLDHKNLDKDVPYFANVNVAVYIXDNMVKQLPANLLYEVKIHETDKNIVVYRGE</sequence>
<comment type="function">
    <text>Involved in the biosynthesis of tetrahydrobiopterin, an essential cofactor of aromatic amino acid hydroxylases. Catalyzes the transformation of 7,8-dihydroneopterin triphosphate into 6-pyruvoyl tetrahydropterin.</text>
</comment>
<comment type="catalytic activity">
    <reaction>
        <text>7,8-dihydroneopterin 3'-triphosphate = 6-pyruvoyl-5,6,7,8-tetrahydropterin + triphosphate + H(+)</text>
        <dbReference type="Rhea" id="RHEA:22048"/>
        <dbReference type="ChEBI" id="CHEBI:15378"/>
        <dbReference type="ChEBI" id="CHEBI:18036"/>
        <dbReference type="ChEBI" id="CHEBI:58462"/>
        <dbReference type="ChEBI" id="CHEBI:136564"/>
        <dbReference type="EC" id="4.2.3.12"/>
    </reaction>
</comment>
<comment type="cofactor">
    <cofactor evidence="1">
        <name>Zn(2+)</name>
        <dbReference type="ChEBI" id="CHEBI:29105"/>
    </cofactor>
    <text evidence="1">Binds 1 zinc ion per subunit.</text>
</comment>
<comment type="pathway">
    <text>Cofactor biosynthesis; tetrahydrobiopterin biosynthesis; tetrahydrobiopterin from 7,8-dihydroneopterin triphosphate: step 1/3.</text>
</comment>
<comment type="subunit">
    <text evidence="1">Homohexamer formed of two homotrimers in a head to head fashion.</text>
</comment>
<comment type="miscellaneous">
    <text>Two isoforms of this protein have been found.</text>
</comment>
<comment type="miscellaneous">
    <text>The active site is at the interface between 2 subunits. The proton acceptor Cys is on one subunit, and the charge relay system is on the other subunit.</text>
</comment>
<comment type="similarity">
    <text evidence="5">Belongs to the PTPS family.</text>
</comment>
<gene>
    <name type="primary">pts</name>
</gene>
<proteinExistence type="evidence at protein level"/>
<dbReference type="EC" id="4.2.3.12"/>
<dbReference type="iPTMnet" id="P80081"/>
<dbReference type="UniPathway" id="UPA00849">
    <property type="reaction ID" value="UER00819"/>
</dbReference>
<dbReference type="Proteomes" id="UP000087266">
    <property type="component" value="Unplaced"/>
</dbReference>
<dbReference type="GO" id="GO:0005739">
    <property type="term" value="C:mitochondrion"/>
    <property type="evidence" value="ECO:0007669"/>
    <property type="project" value="TreeGrafter"/>
</dbReference>
<dbReference type="GO" id="GO:0003874">
    <property type="term" value="F:6-pyruvoyltetrahydropterin synthase activity"/>
    <property type="evidence" value="ECO:0007669"/>
    <property type="project" value="UniProtKB-EC"/>
</dbReference>
<dbReference type="GO" id="GO:0046872">
    <property type="term" value="F:metal ion binding"/>
    <property type="evidence" value="ECO:0007669"/>
    <property type="project" value="UniProtKB-KW"/>
</dbReference>
<dbReference type="GO" id="GO:0006729">
    <property type="term" value="P:tetrahydrobiopterin biosynthetic process"/>
    <property type="evidence" value="ECO:0007669"/>
    <property type="project" value="UniProtKB-UniPathway"/>
</dbReference>
<dbReference type="Gene3D" id="3.30.479.10">
    <property type="entry name" value="6-pyruvoyl tetrahydropterin synthase/QueD"/>
    <property type="match status" value="1"/>
</dbReference>
<dbReference type="InterPro" id="IPR007115">
    <property type="entry name" value="6-PTP_synth/QueD"/>
</dbReference>
<dbReference type="InterPro" id="IPR038418">
    <property type="entry name" value="6-PTP_synth/QueD_sf"/>
</dbReference>
<dbReference type="InterPro" id="IPR022469">
    <property type="entry name" value="PTPS_His_AS"/>
</dbReference>
<dbReference type="PANTHER" id="PTHR12589:SF7">
    <property type="entry name" value="6-PYRUVOYL TETRAHYDROBIOPTERIN SYNTHASE"/>
    <property type="match status" value="1"/>
</dbReference>
<dbReference type="PANTHER" id="PTHR12589">
    <property type="entry name" value="PYRUVOYL TETRAHYDROBIOPTERIN SYNTHASE"/>
    <property type="match status" value="1"/>
</dbReference>
<dbReference type="Pfam" id="PF01242">
    <property type="entry name" value="PTPS"/>
    <property type="match status" value="1"/>
</dbReference>
<dbReference type="SUPFAM" id="SSF55620">
    <property type="entry name" value="Tetrahydrobiopterin biosynthesis enzymes-like"/>
    <property type="match status" value="1"/>
</dbReference>
<dbReference type="PROSITE" id="PS00988">
    <property type="entry name" value="PTPS_2"/>
    <property type="match status" value="1"/>
</dbReference>
<name>PTPS_SALSA</name>
<organism>
    <name type="scientific">Salmo salar</name>
    <name type="common">Atlantic salmon</name>
    <dbReference type="NCBI Taxonomy" id="8030"/>
    <lineage>
        <taxon>Eukaryota</taxon>
        <taxon>Metazoa</taxon>
        <taxon>Chordata</taxon>
        <taxon>Craniata</taxon>
        <taxon>Vertebrata</taxon>
        <taxon>Euteleostomi</taxon>
        <taxon>Actinopterygii</taxon>
        <taxon>Neopterygii</taxon>
        <taxon>Teleostei</taxon>
        <taxon>Protacanthopterygii</taxon>
        <taxon>Salmoniformes</taxon>
        <taxon>Salmonidae</taxon>
        <taxon>Salmoninae</taxon>
        <taxon>Salmo</taxon>
    </lineage>
</organism>